<accession>A0QBI3</accession>
<dbReference type="EC" id="2.6.1.52" evidence="1"/>
<dbReference type="EMBL" id="CP000479">
    <property type="protein sequence ID" value="ABK67008.1"/>
    <property type="molecule type" value="Genomic_DNA"/>
</dbReference>
<dbReference type="SMR" id="A0QBI3"/>
<dbReference type="KEGG" id="mav:MAV_1012"/>
<dbReference type="HOGENOM" id="CLU_061974_0_0_11"/>
<dbReference type="UniPathway" id="UPA00135">
    <property type="reaction ID" value="UER00197"/>
</dbReference>
<dbReference type="UniPathway" id="UPA00244">
    <property type="reaction ID" value="UER00311"/>
</dbReference>
<dbReference type="Proteomes" id="UP000001574">
    <property type="component" value="Chromosome"/>
</dbReference>
<dbReference type="GO" id="GO:0005737">
    <property type="term" value="C:cytoplasm"/>
    <property type="evidence" value="ECO:0007669"/>
    <property type="project" value="UniProtKB-SubCell"/>
</dbReference>
<dbReference type="GO" id="GO:0008453">
    <property type="term" value="F:alanine-glyoxylate transaminase activity"/>
    <property type="evidence" value="ECO:0007669"/>
    <property type="project" value="TreeGrafter"/>
</dbReference>
<dbReference type="GO" id="GO:0004760">
    <property type="term" value="F:L-serine-pyruvate transaminase activity"/>
    <property type="evidence" value="ECO:0007669"/>
    <property type="project" value="TreeGrafter"/>
</dbReference>
<dbReference type="GO" id="GO:0004648">
    <property type="term" value="F:O-phospho-L-serine:2-oxoglutarate aminotransferase activity"/>
    <property type="evidence" value="ECO:0007669"/>
    <property type="project" value="UniProtKB-UniRule"/>
</dbReference>
<dbReference type="GO" id="GO:0030170">
    <property type="term" value="F:pyridoxal phosphate binding"/>
    <property type="evidence" value="ECO:0007669"/>
    <property type="project" value="UniProtKB-UniRule"/>
</dbReference>
<dbReference type="GO" id="GO:0019265">
    <property type="term" value="P:glycine biosynthetic process, by transamination of glyoxylate"/>
    <property type="evidence" value="ECO:0007669"/>
    <property type="project" value="TreeGrafter"/>
</dbReference>
<dbReference type="GO" id="GO:0006564">
    <property type="term" value="P:L-serine biosynthetic process"/>
    <property type="evidence" value="ECO:0007669"/>
    <property type="project" value="UniProtKB-UniRule"/>
</dbReference>
<dbReference type="GO" id="GO:0008615">
    <property type="term" value="P:pyridoxine biosynthetic process"/>
    <property type="evidence" value="ECO:0007669"/>
    <property type="project" value="UniProtKB-UniRule"/>
</dbReference>
<dbReference type="Gene3D" id="3.90.1150.10">
    <property type="entry name" value="Aspartate Aminotransferase, domain 1"/>
    <property type="match status" value="1"/>
</dbReference>
<dbReference type="Gene3D" id="3.40.640.10">
    <property type="entry name" value="Type I PLP-dependent aspartate aminotransferase-like (Major domain)"/>
    <property type="match status" value="1"/>
</dbReference>
<dbReference type="HAMAP" id="MF_00160">
    <property type="entry name" value="SerC_aminotrans_5"/>
    <property type="match status" value="1"/>
</dbReference>
<dbReference type="InterPro" id="IPR000192">
    <property type="entry name" value="Aminotrans_V_dom"/>
</dbReference>
<dbReference type="InterPro" id="IPR022278">
    <property type="entry name" value="Pser_aminoTfrase"/>
</dbReference>
<dbReference type="InterPro" id="IPR006272">
    <property type="entry name" value="Pser_aminoTfrase_mycobac"/>
</dbReference>
<dbReference type="InterPro" id="IPR015424">
    <property type="entry name" value="PyrdxlP-dep_Trfase"/>
</dbReference>
<dbReference type="InterPro" id="IPR015421">
    <property type="entry name" value="PyrdxlP-dep_Trfase_major"/>
</dbReference>
<dbReference type="InterPro" id="IPR015422">
    <property type="entry name" value="PyrdxlP-dep_Trfase_small"/>
</dbReference>
<dbReference type="NCBIfam" id="TIGR01366">
    <property type="entry name" value="serC_3"/>
    <property type="match status" value="1"/>
</dbReference>
<dbReference type="PANTHER" id="PTHR21152:SF40">
    <property type="entry name" value="ALANINE--GLYOXYLATE AMINOTRANSFERASE"/>
    <property type="match status" value="1"/>
</dbReference>
<dbReference type="PANTHER" id="PTHR21152">
    <property type="entry name" value="AMINOTRANSFERASE CLASS V"/>
    <property type="match status" value="1"/>
</dbReference>
<dbReference type="Pfam" id="PF00266">
    <property type="entry name" value="Aminotran_5"/>
    <property type="match status" value="1"/>
</dbReference>
<dbReference type="PIRSF" id="PIRSF000525">
    <property type="entry name" value="SerC"/>
    <property type="match status" value="1"/>
</dbReference>
<dbReference type="SUPFAM" id="SSF53383">
    <property type="entry name" value="PLP-dependent transferases"/>
    <property type="match status" value="1"/>
</dbReference>
<keyword id="KW-0028">Amino-acid biosynthesis</keyword>
<keyword id="KW-0032">Aminotransferase</keyword>
<keyword id="KW-0963">Cytoplasm</keyword>
<keyword id="KW-0663">Pyridoxal phosphate</keyword>
<keyword id="KW-0664">Pyridoxine biosynthesis</keyword>
<keyword id="KW-0718">Serine biosynthesis</keyword>
<keyword id="KW-0808">Transferase</keyword>
<sequence>MSMADQLQIPADIKPRDGRFGCGPSKVRPEQLQALSTTAAPLFGTSHRQAPVKNLVGRLRSGLAELFSLPDGYQVILGNGGATAFWDAAAFGLIDKRSLHLSYGEFSSKFAAAVAKNPFVGDPVVIKSDAGSAPEPQSDPSVDLIAWAHNETSTGVAVPVRRPADSGDALVAIDATSGAGGLPVDIGETDAYYFSPQKNFAGDGGLWLALMSPAALARVESIAASGRWVPDFLSLPIAVENSLKDQTYNTPAIGTLALMAEQVDWMLGNGGLDWAVKRTADSAGRLYSWAEERDYTTPFVADPKLRSQVVGTIDLVDDVDAAAVAKILRANGVVDTEPYRKLGRNQLRVGMFPAVDPDDVSALTQCVDWVVERL</sequence>
<gene>
    <name evidence="1" type="primary">serC</name>
    <name type="ordered locus">MAV_1012</name>
</gene>
<evidence type="ECO:0000255" key="1">
    <source>
        <dbReference type="HAMAP-Rule" id="MF_00160"/>
    </source>
</evidence>
<reference key="1">
    <citation type="submission" date="2006-10" db="EMBL/GenBank/DDBJ databases">
        <authorList>
            <person name="Fleischmann R.D."/>
            <person name="Dodson R.J."/>
            <person name="Haft D.H."/>
            <person name="Merkel J.S."/>
            <person name="Nelson W.C."/>
            <person name="Fraser C.M."/>
        </authorList>
    </citation>
    <scope>NUCLEOTIDE SEQUENCE [LARGE SCALE GENOMIC DNA]</scope>
    <source>
        <strain>104</strain>
    </source>
</reference>
<protein>
    <recommendedName>
        <fullName>Putative phosphoserine aminotransferase</fullName>
        <ecNumber evidence="1">2.6.1.52</ecNumber>
    </recommendedName>
    <alternativeName>
        <fullName evidence="1">Phosphohydroxythreonine aminotransferase</fullName>
        <shortName evidence="1">PSAT</shortName>
    </alternativeName>
</protein>
<name>SERC_MYCA1</name>
<organism>
    <name type="scientific">Mycobacterium avium (strain 104)</name>
    <dbReference type="NCBI Taxonomy" id="243243"/>
    <lineage>
        <taxon>Bacteria</taxon>
        <taxon>Bacillati</taxon>
        <taxon>Actinomycetota</taxon>
        <taxon>Actinomycetes</taxon>
        <taxon>Mycobacteriales</taxon>
        <taxon>Mycobacteriaceae</taxon>
        <taxon>Mycobacterium</taxon>
        <taxon>Mycobacterium avium complex (MAC)</taxon>
    </lineage>
</organism>
<proteinExistence type="inferred from homology"/>
<feature type="chain" id="PRO_0000293584" description="Putative phosphoserine aminotransferase">
    <location>
        <begin position="1"/>
        <end position="374"/>
    </location>
</feature>
<feature type="binding site" evidence="1">
    <location>
        <position position="48"/>
    </location>
    <ligand>
        <name>L-glutamate</name>
        <dbReference type="ChEBI" id="CHEBI:29985"/>
    </ligand>
</feature>
<feature type="binding site" evidence="1">
    <location>
        <begin position="82"/>
        <end position="83"/>
    </location>
    <ligand>
        <name>pyridoxal 5'-phosphate</name>
        <dbReference type="ChEBI" id="CHEBI:597326"/>
    </ligand>
</feature>
<feature type="binding site" evidence="1">
    <location>
        <position position="106"/>
    </location>
    <ligand>
        <name>pyridoxal 5'-phosphate</name>
        <dbReference type="ChEBI" id="CHEBI:597326"/>
    </ligand>
</feature>
<feature type="binding site" evidence="1">
    <location>
        <position position="152"/>
    </location>
    <ligand>
        <name>pyridoxal 5'-phosphate</name>
        <dbReference type="ChEBI" id="CHEBI:597326"/>
    </ligand>
</feature>
<feature type="binding site" evidence="1">
    <location>
        <position position="174"/>
    </location>
    <ligand>
        <name>pyridoxal 5'-phosphate</name>
        <dbReference type="ChEBI" id="CHEBI:597326"/>
    </ligand>
</feature>
<feature type="binding site" evidence="1">
    <location>
        <position position="197"/>
    </location>
    <ligand>
        <name>pyridoxal 5'-phosphate</name>
        <dbReference type="ChEBI" id="CHEBI:597326"/>
    </ligand>
</feature>
<feature type="binding site" evidence="1">
    <location>
        <begin position="249"/>
        <end position="250"/>
    </location>
    <ligand>
        <name>pyridoxal 5'-phosphate</name>
        <dbReference type="ChEBI" id="CHEBI:597326"/>
    </ligand>
</feature>
<feature type="modified residue" description="N6-(pyridoxal phosphate)lysine" evidence="1">
    <location>
        <position position="198"/>
    </location>
</feature>
<comment type="function">
    <text evidence="1">Catalyzes the reversible conversion of 3-phosphohydroxypyruvate to phosphoserine and of 3-hydroxy-2-oxo-4-phosphonooxybutanoate to phosphohydroxythreonine.</text>
</comment>
<comment type="catalytic activity">
    <reaction evidence="1">
        <text>O-phospho-L-serine + 2-oxoglutarate = 3-phosphooxypyruvate + L-glutamate</text>
        <dbReference type="Rhea" id="RHEA:14329"/>
        <dbReference type="ChEBI" id="CHEBI:16810"/>
        <dbReference type="ChEBI" id="CHEBI:18110"/>
        <dbReference type="ChEBI" id="CHEBI:29985"/>
        <dbReference type="ChEBI" id="CHEBI:57524"/>
        <dbReference type="EC" id="2.6.1.52"/>
    </reaction>
</comment>
<comment type="catalytic activity">
    <reaction evidence="1">
        <text>4-(phosphooxy)-L-threonine + 2-oxoglutarate = (R)-3-hydroxy-2-oxo-4-phosphooxybutanoate + L-glutamate</text>
        <dbReference type="Rhea" id="RHEA:16573"/>
        <dbReference type="ChEBI" id="CHEBI:16810"/>
        <dbReference type="ChEBI" id="CHEBI:29985"/>
        <dbReference type="ChEBI" id="CHEBI:58452"/>
        <dbReference type="ChEBI" id="CHEBI:58538"/>
        <dbReference type="EC" id="2.6.1.52"/>
    </reaction>
</comment>
<comment type="cofactor">
    <cofactor evidence="1">
        <name>pyridoxal 5'-phosphate</name>
        <dbReference type="ChEBI" id="CHEBI:597326"/>
    </cofactor>
    <text evidence="1">Binds 1 pyridoxal phosphate per subunit.</text>
</comment>
<comment type="pathway">
    <text evidence="1">Amino-acid biosynthesis; L-serine biosynthesis; L-serine from 3-phospho-D-glycerate: step 2/3.</text>
</comment>
<comment type="pathway">
    <text evidence="1">Cofactor biosynthesis; pyridoxine 5'-phosphate biosynthesis; pyridoxine 5'-phosphate from D-erythrose 4-phosphate: step 3/5.</text>
</comment>
<comment type="subunit">
    <text evidence="1">Homodimer.</text>
</comment>
<comment type="subcellular location">
    <subcellularLocation>
        <location evidence="1">Cytoplasm</location>
    </subcellularLocation>
</comment>
<comment type="similarity">
    <text evidence="1">Belongs to the class-V pyridoxal-phosphate-dependent aminotransferase family. SerC subfamily.</text>
</comment>